<keyword id="KW-0067">ATP-binding</keyword>
<keyword id="KW-0436">Ligase</keyword>
<keyword id="KW-0547">Nucleotide-binding</keyword>
<keyword id="KW-0648">Protein biosynthesis</keyword>
<organism>
    <name type="scientific">Rickettsia akari (strain Hartford)</name>
    <dbReference type="NCBI Taxonomy" id="293614"/>
    <lineage>
        <taxon>Bacteria</taxon>
        <taxon>Pseudomonadati</taxon>
        <taxon>Pseudomonadota</taxon>
        <taxon>Alphaproteobacteria</taxon>
        <taxon>Rickettsiales</taxon>
        <taxon>Rickettsiaceae</taxon>
        <taxon>Rickettsieae</taxon>
        <taxon>Rickettsia</taxon>
        <taxon>spotted fever group</taxon>
    </lineage>
</organism>
<reference key="1">
    <citation type="submission" date="2007-09" db="EMBL/GenBank/DDBJ databases">
        <title>Complete genome sequence of Rickettsia akari.</title>
        <authorList>
            <person name="Madan A."/>
            <person name="Fahey J."/>
            <person name="Helton E."/>
            <person name="Ketteman M."/>
            <person name="Madan A."/>
            <person name="Rodrigues S."/>
            <person name="Sanchez A."/>
            <person name="Whiting M."/>
            <person name="Dasch G."/>
            <person name="Eremeeva M."/>
        </authorList>
    </citation>
    <scope>NUCLEOTIDE SEQUENCE [LARGE SCALE GENOMIC DNA]</scope>
    <source>
        <strain>Hartford</strain>
    </source>
</reference>
<comment type="function">
    <text evidence="1">Allows the formation of correctly charged Gln-tRNA(Gln) through the transamidation of misacylated Glu-tRNA(Gln) in organisms which lack glutaminyl-tRNA synthetase. The reaction takes place in the presence of glutamine and ATP through an activated gamma-phospho-Glu-tRNA(Gln).</text>
</comment>
<comment type="catalytic activity">
    <reaction evidence="1">
        <text>L-glutamyl-tRNA(Gln) + L-glutamine + ATP + H2O = L-glutaminyl-tRNA(Gln) + L-glutamate + ADP + phosphate + H(+)</text>
        <dbReference type="Rhea" id="RHEA:17521"/>
        <dbReference type="Rhea" id="RHEA-COMP:9681"/>
        <dbReference type="Rhea" id="RHEA-COMP:9684"/>
        <dbReference type="ChEBI" id="CHEBI:15377"/>
        <dbReference type="ChEBI" id="CHEBI:15378"/>
        <dbReference type="ChEBI" id="CHEBI:29985"/>
        <dbReference type="ChEBI" id="CHEBI:30616"/>
        <dbReference type="ChEBI" id="CHEBI:43474"/>
        <dbReference type="ChEBI" id="CHEBI:58359"/>
        <dbReference type="ChEBI" id="CHEBI:78520"/>
        <dbReference type="ChEBI" id="CHEBI:78521"/>
        <dbReference type="ChEBI" id="CHEBI:456216"/>
        <dbReference type="EC" id="6.3.5.7"/>
    </reaction>
</comment>
<comment type="subunit">
    <text evidence="1">Heterotrimer of A, B and C subunits.</text>
</comment>
<comment type="similarity">
    <text evidence="1">Belongs to the amidase family. GatA subfamily.</text>
</comment>
<accession>A8GMC0</accession>
<proteinExistence type="inferred from homology"/>
<gene>
    <name evidence="1" type="primary">gatA</name>
    <name type="ordered locus">A1C_01075</name>
</gene>
<feature type="chain" id="PRO_1000015897" description="Glutamyl-tRNA(Gln) amidotransferase subunit A">
    <location>
        <begin position="1"/>
        <end position="492"/>
    </location>
</feature>
<feature type="active site" description="Charge relay system" evidence="1">
    <location>
        <position position="78"/>
    </location>
</feature>
<feature type="active site" description="Charge relay system" evidence="1">
    <location>
        <position position="158"/>
    </location>
</feature>
<feature type="active site" description="Acyl-ester intermediate" evidence="1">
    <location>
        <position position="182"/>
    </location>
</feature>
<dbReference type="EC" id="6.3.5.7" evidence="1"/>
<dbReference type="EMBL" id="CP000847">
    <property type="protein sequence ID" value="ABV74545.1"/>
    <property type="molecule type" value="Genomic_DNA"/>
</dbReference>
<dbReference type="RefSeq" id="WP_012013415.1">
    <property type="nucleotide sequence ID" value="NC_009881.1"/>
</dbReference>
<dbReference type="SMR" id="A8GMC0"/>
<dbReference type="STRING" id="293614.A1C_01075"/>
<dbReference type="KEGG" id="rak:A1C_01075"/>
<dbReference type="eggNOG" id="COG0154">
    <property type="taxonomic scope" value="Bacteria"/>
</dbReference>
<dbReference type="HOGENOM" id="CLU_009600_0_3_5"/>
<dbReference type="Proteomes" id="UP000006830">
    <property type="component" value="Chromosome"/>
</dbReference>
<dbReference type="GO" id="GO:0030956">
    <property type="term" value="C:glutamyl-tRNA(Gln) amidotransferase complex"/>
    <property type="evidence" value="ECO:0007669"/>
    <property type="project" value="InterPro"/>
</dbReference>
<dbReference type="GO" id="GO:0005524">
    <property type="term" value="F:ATP binding"/>
    <property type="evidence" value="ECO:0007669"/>
    <property type="project" value="UniProtKB-KW"/>
</dbReference>
<dbReference type="GO" id="GO:0050567">
    <property type="term" value="F:glutaminyl-tRNA synthase (glutamine-hydrolyzing) activity"/>
    <property type="evidence" value="ECO:0007669"/>
    <property type="project" value="UniProtKB-UniRule"/>
</dbReference>
<dbReference type="GO" id="GO:0006412">
    <property type="term" value="P:translation"/>
    <property type="evidence" value="ECO:0007669"/>
    <property type="project" value="UniProtKB-UniRule"/>
</dbReference>
<dbReference type="Gene3D" id="3.90.1300.10">
    <property type="entry name" value="Amidase signature (AS) domain"/>
    <property type="match status" value="1"/>
</dbReference>
<dbReference type="HAMAP" id="MF_00120">
    <property type="entry name" value="GatA"/>
    <property type="match status" value="1"/>
</dbReference>
<dbReference type="InterPro" id="IPR000120">
    <property type="entry name" value="Amidase"/>
</dbReference>
<dbReference type="InterPro" id="IPR020556">
    <property type="entry name" value="Amidase_CS"/>
</dbReference>
<dbReference type="InterPro" id="IPR023631">
    <property type="entry name" value="Amidase_dom"/>
</dbReference>
<dbReference type="InterPro" id="IPR036928">
    <property type="entry name" value="AS_sf"/>
</dbReference>
<dbReference type="InterPro" id="IPR004412">
    <property type="entry name" value="GatA"/>
</dbReference>
<dbReference type="NCBIfam" id="TIGR00132">
    <property type="entry name" value="gatA"/>
    <property type="match status" value="1"/>
</dbReference>
<dbReference type="PANTHER" id="PTHR11895:SF151">
    <property type="entry name" value="GLUTAMYL-TRNA(GLN) AMIDOTRANSFERASE SUBUNIT A"/>
    <property type="match status" value="1"/>
</dbReference>
<dbReference type="PANTHER" id="PTHR11895">
    <property type="entry name" value="TRANSAMIDASE"/>
    <property type="match status" value="1"/>
</dbReference>
<dbReference type="Pfam" id="PF01425">
    <property type="entry name" value="Amidase"/>
    <property type="match status" value="1"/>
</dbReference>
<dbReference type="SUPFAM" id="SSF75304">
    <property type="entry name" value="Amidase signature (AS) enzymes"/>
    <property type="match status" value="1"/>
</dbReference>
<dbReference type="PROSITE" id="PS00571">
    <property type="entry name" value="AMIDASES"/>
    <property type="match status" value="1"/>
</dbReference>
<sequence>MTELNKLTVADSIKGLKNKDFTSKELVNAHITQIEKHRNLNAYVTETFDLALKQAEAADQNYAQNQPRTLEGIPFAAKDLFCTKGIRTTACSNILKNFVPNYESSVTQNIFDKGGVMLGKTNMDEFAMGSANITSCFGNVISPWKANDDNADLVPGGSSGGSAAAVSGFMASAALGSDTGGSVRQPASFTGLVGFKPTYGRCSRYGMVSFASSLDQAGIFTRSVLDSSIMLEAMMGFDAKDSTSIKAEVPELQSAIGSSMKNIKIGVPLNLGEGGIEPDVMKIWQDTIELLKNAGAEIVDIILPHAKYGVAVYYVIAPAEASSNLSRYDGVRYGLRVERENMTLDEMYEMTRSAGFGEEVKRRIMIGTYVLSSNCMDAYYLKAQKVRRLVANDFNNAFEKVDAIVLPAAPTEAFKIAEKQNDPTIMYLNDLFTIPASLAGLPCASIPAGLSARGLPLGMQIIGKQLDEYNVLKVASTIESGVKHIKFEPAGF</sequence>
<evidence type="ECO:0000255" key="1">
    <source>
        <dbReference type="HAMAP-Rule" id="MF_00120"/>
    </source>
</evidence>
<name>GATA_RICAH</name>
<protein>
    <recommendedName>
        <fullName evidence="1">Glutamyl-tRNA(Gln) amidotransferase subunit A</fullName>
        <shortName evidence="1">Glu-ADT subunit A</shortName>
        <ecNumber evidence="1">6.3.5.7</ecNumber>
    </recommendedName>
</protein>